<evidence type="ECO:0000255" key="1"/>
<evidence type="ECO:0000269" key="2">
    <source>
    </source>
</evidence>
<evidence type="ECO:0000269" key="3">
    <source>
    </source>
</evidence>
<evidence type="ECO:0000305" key="4"/>
<feature type="signal peptide" evidence="1">
    <location>
        <begin position="1"/>
        <end position="23"/>
    </location>
</feature>
<feature type="chain" id="PRO_0000248528" description="UPF0375 protein Y45F10C.4">
    <location>
        <begin position="24"/>
        <end position="124"/>
    </location>
</feature>
<feature type="glycosylation site" description="N-linked (GlcNAc...) asparagine" evidence="1">
    <location>
        <position position="36"/>
    </location>
</feature>
<feature type="glycosylation site" description="N-linked (GlcNAc...) asparagine" evidence="2 3">
    <location>
        <position position="62"/>
    </location>
</feature>
<name>U375F_CAEEL</name>
<proteinExistence type="evidence at protein level"/>
<keyword id="KW-0325">Glycoprotein</keyword>
<keyword id="KW-1185">Reference proteome</keyword>
<keyword id="KW-0964">Secreted</keyword>
<keyword id="KW-0732">Signal</keyword>
<reference key="1">
    <citation type="journal article" date="1998" name="Science">
        <title>Genome sequence of the nematode C. elegans: a platform for investigating biology.</title>
        <authorList>
            <consortium name="The C. elegans sequencing consortium"/>
        </authorList>
    </citation>
    <scope>NUCLEOTIDE SEQUENCE [LARGE SCALE GENOMIC DNA]</scope>
    <source>
        <strain>Bristol N2</strain>
    </source>
</reference>
<reference key="2">
    <citation type="journal article" date="2003" name="Nat. Biotechnol.">
        <title>Lectin affinity capture, isotope-coded tagging and mass spectrometry to identify N-linked glycoproteins.</title>
        <authorList>
            <person name="Kaji H."/>
            <person name="Saito H."/>
            <person name="Yamauchi Y."/>
            <person name="Shinkawa T."/>
            <person name="Taoka M."/>
            <person name="Hirabayashi J."/>
            <person name="Kasai K."/>
            <person name="Takahashi N."/>
            <person name="Isobe T."/>
        </authorList>
    </citation>
    <scope>GLYCOSYLATION [LARGE SCALE ANALYSIS] AT ASN-62</scope>
    <scope>IDENTIFICATION BY MASS SPECTROMETRY</scope>
    <source>
        <strain>Bristol N2</strain>
    </source>
</reference>
<reference key="3">
    <citation type="journal article" date="2007" name="Mol. Cell. Proteomics">
        <title>Proteomics reveals N-linked glycoprotein diversity in Caenorhabditis elegans and suggests an atypical translocation mechanism for integral membrane proteins.</title>
        <authorList>
            <person name="Kaji H."/>
            <person name="Kamiie J."/>
            <person name="Kawakami H."/>
            <person name="Kido K."/>
            <person name="Yamauchi Y."/>
            <person name="Shinkawa T."/>
            <person name="Taoka M."/>
            <person name="Takahashi N."/>
            <person name="Isobe T."/>
        </authorList>
    </citation>
    <scope>GLYCOSYLATION [LARGE SCALE ANALYSIS] AT ASN-62</scope>
    <scope>IDENTIFICATION BY MASS SPECTROMETRY</scope>
    <source>
        <strain>Bristol N2</strain>
    </source>
</reference>
<comment type="subcellular location">
    <subcellularLocation>
        <location evidence="4">Secreted</location>
    </subcellularLocation>
</comment>
<comment type="similarity">
    <text evidence="4">Belongs to the UPF0375 family.</text>
</comment>
<protein>
    <recommendedName>
        <fullName>UPF0375 protein Y45F10C.4</fullName>
    </recommendedName>
</protein>
<organism>
    <name type="scientific">Caenorhabditis elegans</name>
    <dbReference type="NCBI Taxonomy" id="6239"/>
    <lineage>
        <taxon>Eukaryota</taxon>
        <taxon>Metazoa</taxon>
        <taxon>Ecdysozoa</taxon>
        <taxon>Nematoda</taxon>
        <taxon>Chromadorea</taxon>
        <taxon>Rhabditida</taxon>
        <taxon>Rhabditina</taxon>
        <taxon>Rhabditomorpha</taxon>
        <taxon>Rhabditoidea</taxon>
        <taxon>Rhabditidae</taxon>
        <taxon>Peloderinae</taxon>
        <taxon>Caenorhabditis</taxon>
    </lineage>
</organism>
<accession>O45944</accession>
<gene>
    <name type="ORF">Y45F10C.4</name>
</gene>
<sequence>MNFLPSTVLLLSFVVAIISGSFSSISEEWKAVCECNLSKLNNHAKTGNCKTTALWKVTSDTNCTASEYLKITVFPANDDPLNRVEQCTMTPCDQTEKTPADCNVAFSAAKLAEIAKEEKSKMII</sequence>
<dbReference type="EMBL" id="Z99273">
    <property type="protein sequence ID" value="CAB16479.1"/>
    <property type="molecule type" value="Genomic_DNA"/>
</dbReference>
<dbReference type="PIR" id="T26928">
    <property type="entry name" value="T26928"/>
</dbReference>
<dbReference type="RefSeq" id="NP_502640.1">
    <property type="nucleotide sequence ID" value="NM_070239.6"/>
</dbReference>
<dbReference type="BioGRID" id="43419">
    <property type="interactions" value="2"/>
</dbReference>
<dbReference type="FunCoup" id="O45944">
    <property type="interactions" value="252"/>
</dbReference>
<dbReference type="STRING" id="6239.Y45F10C.4.1"/>
<dbReference type="iPTMnet" id="O45944"/>
<dbReference type="PaxDb" id="6239-Y45F10C.4"/>
<dbReference type="PeptideAtlas" id="O45944"/>
<dbReference type="EnsemblMetazoa" id="Y45F10C.4.1">
    <property type="protein sequence ID" value="Y45F10C.4.1"/>
    <property type="gene ID" value="WBGene00012880"/>
</dbReference>
<dbReference type="GeneID" id="178335"/>
<dbReference type="KEGG" id="cel:CELE_Y45F10C.4"/>
<dbReference type="UCSC" id="Y45F10C.4">
    <property type="organism name" value="c. elegans"/>
</dbReference>
<dbReference type="AGR" id="WB:WBGene00012880"/>
<dbReference type="CTD" id="178335"/>
<dbReference type="WormBase" id="Y45F10C.4">
    <property type="protein sequence ID" value="CE16638"/>
    <property type="gene ID" value="WBGene00012880"/>
</dbReference>
<dbReference type="HOGENOM" id="CLU_2028770_0_0_1"/>
<dbReference type="InParanoid" id="O45944"/>
<dbReference type="PRO" id="PR:O45944"/>
<dbReference type="Proteomes" id="UP000001940">
    <property type="component" value="Chromosome IV"/>
</dbReference>
<dbReference type="Bgee" id="WBGene00012880">
    <property type="expression patterns" value="Expressed in adult organism and 2 other cell types or tissues"/>
</dbReference>
<dbReference type="GO" id="GO:0005576">
    <property type="term" value="C:extracellular region"/>
    <property type="evidence" value="ECO:0007669"/>
    <property type="project" value="UniProtKB-SubCell"/>
</dbReference>
<dbReference type="InterPro" id="IPR009981">
    <property type="entry name" value="DUF1505"/>
</dbReference>
<dbReference type="Pfam" id="PF07403">
    <property type="entry name" value="DUF1505"/>
    <property type="match status" value="1"/>
</dbReference>